<gene>
    <name type="primary">S1</name>
</gene>
<comment type="function">
    <text evidence="1">Outer capsid protein involved in mRNA capping. Catalyzes the last 3 enzymatic activities for formation of the 5' cap structure on the viral plus-strand transcripts, namely the RNA guanylyltransferase, RNA-7N- and RNA-2'O-methyltransferase activities (By similarity).</text>
</comment>
<comment type="catalytic activity">
    <reaction>
        <text>a 5'-end diphospho-ribonucleoside in mRNA + GTP + H(+) = a 5'-end (5'-triphosphoguanosine)-ribonucleoside in mRNA + diphosphate</text>
        <dbReference type="Rhea" id="RHEA:67012"/>
        <dbReference type="Rhea" id="RHEA-COMP:17165"/>
        <dbReference type="Rhea" id="RHEA-COMP:17166"/>
        <dbReference type="ChEBI" id="CHEBI:15378"/>
        <dbReference type="ChEBI" id="CHEBI:33019"/>
        <dbReference type="ChEBI" id="CHEBI:37565"/>
        <dbReference type="ChEBI" id="CHEBI:167616"/>
        <dbReference type="ChEBI" id="CHEBI:167617"/>
        <dbReference type="EC" id="2.7.7.50"/>
    </reaction>
</comment>
<comment type="catalytic activity">
    <reaction>
        <text>a 5'-end (5'-triphosphoguanosine)-ribonucleoside in mRNA + S-adenosyl-L-methionine = a 5'-end (N(7)-methyl 5'-triphosphoguanosine)-ribonucleoside in mRNA + S-adenosyl-L-homocysteine</text>
        <dbReference type="Rhea" id="RHEA:67008"/>
        <dbReference type="Rhea" id="RHEA-COMP:17166"/>
        <dbReference type="Rhea" id="RHEA-COMP:17167"/>
        <dbReference type="ChEBI" id="CHEBI:57856"/>
        <dbReference type="ChEBI" id="CHEBI:59789"/>
        <dbReference type="ChEBI" id="CHEBI:156461"/>
        <dbReference type="ChEBI" id="CHEBI:167617"/>
        <dbReference type="EC" id="2.1.1.56"/>
    </reaction>
</comment>
<comment type="subcellular location">
    <subcellularLocation>
        <location evidence="2">Virion</location>
    </subcellularLocation>
</comment>
<comment type="similarity">
    <text evidence="2">Belongs to the aquareoviridae outer capsid VP1 protein family.</text>
</comment>
<organismHost>
    <name type="scientific">Oncorhynchus keta</name>
    <name type="common">Chum salmon</name>
    <name type="synonym">Salmo keta</name>
    <dbReference type="NCBI Taxonomy" id="8018"/>
</organismHost>
<accession>Q8VA43</accession>
<feature type="chain" id="PRO_0000404184" description="Outer capsid protein VP1">
    <location>
        <begin position="1"/>
        <end position="1297"/>
    </location>
</feature>
<evidence type="ECO:0000250" key="1"/>
<evidence type="ECO:0000305" key="2"/>
<name>VP1_AQRVA</name>
<reference key="1">
    <citation type="journal article" date="1987" name="J. Gen. Virol.">
        <title>Morphological and biochemical properties of four members of a novel group of reoviruses isolated from aquatic animals.</title>
        <authorList>
            <person name="Winton J.R."/>
            <person name="Lannan C.N."/>
            <person name="Fryer J.L."/>
            <person name="Hedrick R.P."/>
            <person name="Meyers T.R."/>
            <person name="Plumb J.A."/>
            <person name="Yamamoto T."/>
        </authorList>
    </citation>
    <scope>NUCLEOTIDE SEQUENCE [GENOMIC RNA]</scope>
</reference>
<reference key="2">
    <citation type="submission" date="2001-09" db="EMBL/GenBank/DDBJ databases">
        <title>Complete genome sequence of the chum salmon virus.</title>
        <authorList>
            <person name="Rao S."/>
            <person name="Carner G.R."/>
            <person name="Chen W."/>
            <person name="Winton J.R."/>
        </authorList>
    </citation>
    <scope>NUCLEOTIDE SEQUENCE [GENOMIC RNA]</scope>
</reference>
<keyword id="KW-0067">ATP-binding</keyword>
<keyword id="KW-0167">Capsid protein</keyword>
<keyword id="KW-0342">GTP-binding</keyword>
<keyword id="KW-0489">Methyltransferase</keyword>
<keyword id="KW-0506">mRNA capping</keyword>
<keyword id="KW-0507">mRNA processing</keyword>
<keyword id="KW-0511">Multifunctional enzyme</keyword>
<keyword id="KW-0547">Nucleotide-binding</keyword>
<keyword id="KW-1152">Outer capsid protein</keyword>
<keyword id="KW-0949">S-adenosyl-L-methionine</keyword>
<keyword id="KW-0808">Transferase</keyword>
<keyword id="KW-0946">Virion</keyword>
<proteinExistence type="inferred from homology"/>
<organism>
    <name type="scientific">Aquareovirus A (isolate Chum salmon/Japan/CSRV/1981)</name>
    <name type="common">AQRV-A</name>
    <dbReference type="NCBI Taxonomy" id="928295"/>
    <lineage>
        <taxon>Viruses</taxon>
        <taxon>Riboviria</taxon>
        <taxon>Orthornavirae</taxon>
        <taxon>Duplornaviricota</taxon>
        <taxon>Resentoviricetes</taxon>
        <taxon>Reovirales</taxon>
        <taxon>Spinareoviridae</taxon>
        <taxon>Aquareovirus</taxon>
        <taxon>Aquareovirus salmonis</taxon>
    </lineage>
</organism>
<protein>
    <recommendedName>
        <fullName>Outer capsid protein VP1</fullName>
    </recommendedName>
    <domain>
        <recommendedName>
            <fullName>mRNA guanylyltransferase</fullName>
            <ecNumber>2.7.7.50</ecNumber>
        </recommendedName>
    </domain>
    <domain>
        <recommendedName>
            <fullName>mRNA (guanine-N(7))-methyltransferase</fullName>
            <ecNumber>2.1.1.56</ecNumber>
        </recommendedName>
    </domain>
</protein>
<sequence>MATVYGIQLTNRLNTATVRRPLRLRRYDSCITTFTTPNGISQLYRALDFQPTSFQASILQTFPPLNAWSPSPQFVPDDLSLSQWKEWITERMRALATVLQRAHPLVANAGREVNPITIGLITSSFLNQRPIDGYLPFLFLARNARDPIAPLVTVDITFSDDTYVSRHVLYTPAGLKYLTLSSYDPTKPSSICTFGKHIPLYATAAFYPDETARLTILHRYNGGPPLIEHFDQPTYGPHVLIPALGSPEGYDTHLNICRLLLAEGLLDSFRLNASAGPSTAVARIDQTYHVVMNGSPDDHTQLATRLSNLSLLAVQGCQMTVQVADHPTMSDVGGFLVRLQGPGDPQRLIAYRTDQILIWQASPFPFGNNARYVRRPGRVPFTIGTTTYVPDTKTPLPFLPQYRQATVNKNNAQDSYELNVLPSLPIYSPFALTGGAFFQARDITGDPANVWPVNTLPGLPRDYFSIQSRQRRELLSRLRSHSDRSYVKDVHNISFASTVLNPVNNQIVLSEGFSMAYLGAASTHGTTDEPLIIEALKSGTVPGVPIPSKISQFGYDVANGSIMDATLAPPTGTFTFVYSDVDQVEDAGLSIVATNRAAVAVTNIALSMTTAGGLTVVKVNFPTPAFWTQLFRNHATDARALYILKPLIVNSVEVFLLFVSRATAGNLVSSPALRQFLVQLFDRSTSLSEVMAHVPLLGDVDTGVTTLGFNACRLYSPDLPTVNITPEIQTLAYQLATIVPSTSFIAREDYDGATAVTFYGKRTFLSRNRLDRLVDVPVPATNAINHQTRFTGSPVYQLFPTNPAPVTQLLWLARTTGLYTASWPRLLLSRWLICGTGPECRILSLMPPATSVTMIDSRPPAESLAAFNPAMNQYIVGNFLDPAQWVANPHDSLTAIFSLGAAFAGAGQDLVVGLTAFLRLIQPSNVQHLWLQLNTTLTSTASLPGLIEIDTRTGQYIFNGGQRTEPYAAPDAILAAIRLVYPAATTSWLTASSTMDWTEYVIGLGSSMSLDDVSTMISYSGLTPILHIDLTQRPMDVPVPLVVGVQAVIHVAAPVQQTTVIGSMAGVQVFTADGVNAPSTIGPLAVVWDPVLSRWDLTITPNQPGVLDVVVDHNGVLLNRGSTTIALPPATIVITFPQAANRDFTNAGNDAAVVCDAFYRLGVFVSVNGAFQPVNPERAAIVTAANARVLHYVYDLSDNHVLMYVCDITDNNIGRNVALPLADIFQTLFPNNTPLLASPPYPSASGRLMLNGQLFVDLDPLPPVLPPGVQIQALSTAIEPARQTAEVPGGAYTYVVV</sequence>
<dbReference type="EC" id="2.7.7.50"/>
<dbReference type="EC" id="2.1.1.56"/>
<dbReference type="EMBL" id="AF418294">
    <property type="protein sequence ID" value="AAL31496.1"/>
    <property type="molecule type" value="Genomic_RNA"/>
</dbReference>
<dbReference type="SMR" id="Q8VA43"/>
<dbReference type="KEGG" id="vg:3773155"/>
<dbReference type="Proteomes" id="UP000101606">
    <property type="component" value="Genome"/>
</dbReference>
<dbReference type="GO" id="GO:0039624">
    <property type="term" value="C:viral outer capsid"/>
    <property type="evidence" value="ECO:0007669"/>
    <property type="project" value="UniProtKB-KW"/>
</dbReference>
<dbReference type="GO" id="GO:0005524">
    <property type="term" value="F:ATP binding"/>
    <property type="evidence" value="ECO:0007669"/>
    <property type="project" value="UniProtKB-KW"/>
</dbReference>
<dbReference type="GO" id="GO:0005525">
    <property type="term" value="F:GTP binding"/>
    <property type="evidence" value="ECO:0007669"/>
    <property type="project" value="UniProtKB-KW"/>
</dbReference>
<dbReference type="GO" id="GO:0004482">
    <property type="term" value="F:mRNA 5'-cap (guanine-N7-)-methyltransferase activity"/>
    <property type="evidence" value="ECO:0007669"/>
    <property type="project" value="UniProtKB-EC"/>
</dbReference>
<dbReference type="GO" id="GO:0004484">
    <property type="term" value="F:mRNA guanylyltransferase activity"/>
    <property type="evidence" value="ECO:0007669"/>
    <property type="project" value="UniProtKB-EC"/>
</dbReference>
<dbReference type="Gene3D" id="3.55.60.10">
    <property type="entry name" value="Reovirus components"/>
    <property type="match status" value="1"/>
</dbReference>
<dbReference type="Gene3D" id="3.90.1810.10">
    <property type="entry name" value="Reovirus components"/>
    <property type="match status" value="1"/>
</dbReference>
<dbReference type="Gene3D" id="3.40.50.10760">
    <property type="entry name" value="Reovirus core"/>
    <property type="match status" value="1"/>
</dbReference>
<dbReference type="Gene3D" id="3.40.50.150">
    <property type="entry name" value="Vaccinia Virus protein VP39"/>
    <property type="match status" value="1"/>
</dbReference>
<dbReference type="InterPro" id="IPR010311">
    <property type="entry name" value="Reovirus_L2"/>
</dbReference>
<dbReference type="InterPro" id="IPR048604">
    <property type="entry name" value="Reovirus_L2_4th"/>
</dbReference>
<dbReference type="InterPro" id="IPR048602">
    <property type="entry name" value="Reovirus_L2_7th"/>
</dbReference>
<dbReference type="InterPro" id="IPR048294">
    <property type="entry name" value="Reovirus_L2_8th"/>
</dbReference>
<dbReference type="InterPro" id="IPR048601">
    <property type="entry name" value="Reovirus_L2_GTase"/>
</dbReference>
<dbReference type="InterPro" id="IPR048598">
    <property type="entry name" value="Reovirus_L2_MT1"/>
</dbReference>
<dbReference type="InterPro" id="IPR048597">
    <property type="entry name" value="Reovirus_L2_MT2"/>
</dbReference>
<dbReference type="InterPro" id="IPR048596">
    <property type="entry name" value="Reovirus_L2_N"/>
</dbReference>
<dbReference type="InterPro" id="IPR029063">
    <property type="entry name" value="SAM-dependent_MTases_sf"/>
</dbReference>
<dbReference type="Pfam" id="PF21062">
    <property type="entry name" value="Reovirus_L2_4th"/>
    <property type="match status" value="1"/>
</dbReference>
<dbReference type="Pfam" id="PF21061">
    <property type="entry name" value="Reovirus_L2_7th"/>
    <property type="match status" value="1"/>
</dbReference>
<dbReference type="Pfam" id="PF06016">
    <property type="entry name" value="Reovirus_L2_8th"/>
    <property type="match status" value="1"/>
</dbReference>
<dbReference type="Pfam" id="PF21063">
    <property type="entry name" value="Reovirus_L2_GTase"/>
    <property type="match status" value="1"/>
</dbReference>
<dbReference type="Pfam" id="PF21065">
    <property type="entry name" value="Reovirus_L2_MT1"/>
    <property type="match status" value="1"/>
</dbReference>
<dbReference type="Pfam" id="PF21066">
    <property type="entry name" value="Reovirus_L2_MT2"/>
    <property type="match status" value="1"/>
</dbReference>
<dbReference type="Pfam" id="PF21064">
    <property type="entry name" value="Reovirus_L2_N"/>
    <property type="match status" value="1"/>
</dbReference>
<dbReference type="PIRSF" id="PIRSF000845">
    <property type="entry name" value="Reovirus_L2"/>
    <property type="match status" value="1"/>
</dbReference>